<dbReference type="EMBL" id="CP000485">
    <property type="protein sequence ID" value="ABK83518.1"/>
    <property type="status" value="ALT_INIT"/>
    <property type="molecule type" value="Genomic_DNA"/>
</dbReference>
<dbReference type="RefSeq" id="WP_001142340.1">
    <property type="nucleotide sequence ID" value="NC_008600.1"/>
</dbReference>
<dbReference type="SMR" id="A0R8H5"/>
<dbReference type="GeneID" id="93010948"/>
<dbReference type="KEGG" id="btl:BALH_0103"/>
<dbReference type="HOGENOM" id="CLU_104295_1_2_9"/>
<dbReference type="GO" id="GO:0015935">
    <property type="term" value="C:small ribosomal subunit"/>
    <property type="evidence" value="ECO:0007669"/>
    <property type="project" value="InterPro"/>
</dbReference>
<dbReference type="GO" id="GO:0019843">
    <property type="term" value="F:rRNA binding"/>
    <property type="evidence" value="ECO:0007669"/>
    <property type="project" value="UniProtKB-UniRule"/>
</dbReference>
<dbReference type="GO" id="GO:0003735">
    <property type="term" value="F:structural constituent of ribosome"/>
    <property type="evidence" value="ECO:0007669"/>
    <property type="project" value="InterPro"/>
</dbReference>
<dbReference type="GO" id="GO:0000049">
    <property type="term" value="F:tRNA binding"/>
    <property type="evidence" value="ECO:0007669"/>
    <property type="project" value="UniProtKB-UniRule"/>
</dbReference>
<dbReference type="GO" id="GO:0006412">
    <property type="term" value="P:translation"/>
    <property type="evidence" value="ECO:0007669"/>
    <property type="project" value="UniProtKB-UniRule"/>
</dbReference>
<dbReference type="CDD" id="cd03368">
    <property type="entry name" value="Ribosomal_S12"/>
    <property type="match status" value="1"/>
</dbReference>
<dbReference type="FunFam" id="2.40.50.140:FF:000001">
    <property type="entry name" value="30S ribosomal protein S12"/>
    <property type="match status" value="1"/>
</dbReference>
<dbReference type="Gene3D" id="2.40.50.140">
    <property type="entry name" value="Nucleic acid-binding proteins"/>
    <property type="match status" value="1"/>
</dbReference>
<dbReference type="HAMAP" id="MF_00403_B">
    <property type="entry name" value="Ribosomal_uS12_B"/>
    <property type="match status" value="1"/>
</dbReference>
<dbReference type="InterPro" id="IPR012340">
    <property type="entry name" value="NA-bd_OB-fold"/>
</dbReference>
<dbReference type="InterPro" id="IPR006032">
    <property type="entry name" value="Ribosomal_uS12"/>
</dbReference>
<dbReference type="InterPro" id="IPR005679">
    <property type="entry name" value="Ribosomal_uS12_bac"/>
</dbReference>
<dbReference type="NCBIfam" id="TIGR00981">
    <property type="entry name" value="rpsL_bact"/>
    <property type="match status" value="1"/>
</dbReference>
<dbReference type="PANTHER" id="PTHR11652">
    <property type="entry name" value="30S RIBOSOMAL PROTEIN S12 FAMILY MEMBER"/>
    <property type="match status" value="1"/>
</dbReference>
<dbReference type="Pfam" id="PF00164">
    <property type="entry name" value="Ribosom_S12_S23"/>
    <property type="match status" value="1"/>
</dbReference>
<dbReference type="PRINTS" id="PR01034">
    <property type="entry name" value="RIBOSOMALS12"/>
</dbReference>
<dbReference type="SUPFAM" id="SSF50249">
    <property type="entry name" value="Nucleic acid-binding proteins"/>
    <property type="match status" value="1"/>
</dbReference>
<dbReference type="PROSITE" id="PS00055">
    <property type="entry name" value="RIBOSOMAL_S12"/>
    <property type="match status" value="1"/>
</dbReference>
<gene>
    <name evidence="2" type="primary">rpsL</name>
    <name type="ordered locus">BALH_0103</name>
</gene>
<proteinExistence type="inferred from homology"/>
<accession>A0R8H5</accession>
<sequence>MPTINQLVRNGRTDKVWKSKSPALNKGFNSLKKKSTDISAPQKRGVCTRVGTMTPKKPNSALRKYARVRLTNGIEVTAYIPGIGHNLQEHSVVLIRGGRVKDLPGVRYHIVRGALDTAGVDKRMQGRSKYGTKKPKAAKK</sequence>
<name>RS12_BACAH</name>
<organism>
    <name type="scientific">Bacillus thuringiensis (strain Al Hakam)</name>
    <dbReference type="NCBI Taxonomy" id="412694"/>
    <lineage>
        <taxon>Bacteria</taxon>
        <taxon>Bacillati</taxon>
        <taxon>Bacillota</taxon>
        <taxon>Bacilli</taxon>
        <taxon>Bacillales</taxon>
        <taxon>Bacillaceae</taxon>
        <taxon>Bacillus</taxon>
        <taxon>Bacillus cereus group</taxon>
    </lineage>
</organism>
<protein>
    <recommendedName>
        <fullName evidence="2">Small ribosomal subunit protein uS12</fullName>
    </recommendedName>
    <alternativeName>
        <fullName evidence="3">30S ribosomal protein S12</fullName>
    </alternativeName>
</protein>
<reference key="1">
    <citation type="journal article" date="2007" name="J. Bacteriol.">
        <title>The complete genome sequence of Bacillus thuringiensis Al Hakam.</title>
        <authorList>
            <person name="Challacombe J.F."/>
            <person name="Altherr M.R."/>
            <person name="Xie G."/>
            <person name="Bhotika S.S."/>
            <person name="Brown N."/>
            <person name="Bruce D."/>
            <person name="Campbell C.S."/>
            <person name="Campbell M.L."/>
            <person name="Chen J."/>
            <person name="Chertkov O."/>
            <person name="Cleland C."/>
            <person name="Dimitrijevic M."/>
            <person name="Doggett N.A."/>
            <person name="Fawcett J.J."/>
            <person name="Glavina T."/>
            <person name="Goodwin L.A."/>
            <person name="Green L.D."/>
            <person name="Han C.S."/>
            <person name="Hill K.K."/>
            <person name="Hitchcock P."/>
            <person name="Jackson P.J."/>
            <person name="Keim P."/>
            <person name="Kewalramani A.R."/>
            <person name="Longmire J."/>
            <person name="Lucas S."/>
            <person name="Malfatti S."/>
            <person name="Martinez D."/>
            <person name="McMurry K."/>
            <person name="Meincke L.J."/>
            <person name="Misra M."/>
            <person name="Moseman B.L."/>
            <person name="Mundt M."/>
            <person name="Munk A.C."/>
            <person name="Okinaka R.T."/>
            <person name="Parson-Quintana B."/>
            <person name="Reilly L.P."/>
            <person name="Richardson P."/>
            <person name="Robinson D.L."/>
            <person name="Saunders E."/>
            <person name="Tapia R."/>
            <person name="Tesmer J.G."/>
            <person name="Thayer N."/>
            <person name="Thompson L.S."/>
            <person name="Tice H."/>
            <person name="Ticknor L.O."/>
            <person name="Wills P.L."/>
            <person name="Gilna P."/>
            <person name="Brettin T.S."/>
        </authorList>
    </citation>
    <scope>NUCLEOTIDE SEQUENCE [LARGE SCALE GENOMIC DNA]</scope>
    <source>
        <strain>Al Hakam</strain>
    </source>
</reference>
<feature type="chain" id="PRO_0000295954" description="Small ribosomal subunit protein uS12">
    <location>
        <begin position="1"/>
        <end position="140"/>
    </location>
</feature>
<feature type="modified residue" description="3-methylthioaspartic acid" evidence="1">
    <location>
        <position position="102"/>
    </location>
</feature>
<keyword id="KW-0488">Methylation</keyword>
<keyword id="KW-0687">Ribonucleoprotein</keyword>
<keyword id="KW-0689">Ribosomal protein</keyword>
<keyword id="KW-0694">RNA-binding</keyword>
<keyword id="KW-0699">rRNA-binding</keyword>
<keyword id="KW-0820">tRNA-binding</keyword>
<evidence type="ECO:0000250" key="1"/>
<evidence type="ECO:0000255" key="2">
    <source>
        <dbReference type="HAMAP-Rule" id="MF_00403"/>
    </source>
</evidence>
<evidence type="ECO:0000305" key="3"/>
<comment type="function">
    <text evidence="2">With S4 and S5 plays an important role in translational accuracy.</text>
</comment>
<comment type="function">
    <text evidence="2">Interacts with and stabilizes bases of the 16S rRNA that are involved in tRNA selection in the A site and with the mRNA backbone. Located at the interface of the 30S and 50S subunits, it traverses the body of the 30S subunit contacting proteins on the other side and probably holding the rRNA structure together. The combined cluster of proteins S8, S12 and S17 appears to hold together the shoulder and platform of the 30S subunit.</text>
</comment>
<comment type="subunit">
    <text evidence="2">Part of the 30S ribosomal subunit. Contacts proteins S8 and S17. May interact with IF1 in the 30S initiation complex.</text>
</comment>
<comment type="similarity">
    <text evidence="2">Belongs to the universal ribosomal protein uS12 family.</text>
</comment>
<comment type="sequence caution" evidence="3">
    <conflict type="erroneous initiation">
        <sequence resource="EMBL-CDS" id="ABK83518"/>
    </conflict>
</comment>